<proteinExistence type="evidence at protein level"/>
<gene>
    <name evidence="1" type="primary">psbA</name>
</gene>
<reference key="1">
    <citation type="journal article" date="1984" name="EMBO J.">
        <title>Chlamydomonas reinhardii gene for the 32,000 mol. wt. protein of photosystem II contains four large introns and is located entirely within the chloroplast inverted repeat.</title>
        <authorList>
            <person name="Erickson J.M."/>
            <person name="Rahire M."/>
            <person name="Rochaix J.-D."/>
        </authorList>
    </citation>
    <scope>NUCLEOTIDE SEQUENCE [GENOMIC DNA]</scope>
</reference>
<reference key="2">
    <citation type="journal article" date="2009" name="BMC Evol. Biol.">
        <title>Nucleotide diversity of the Chlamydomonas reinhardtii plastid genome: addressing the mutational-hazard hypothesis.</title>
        <authorList>
            <person name="Smith D.R."/>
            <person name="Lee R.W."/>
        </authorList>
    </citation>
    <scope>NUCLEOTIDE SEQUENCE [LARGE SCALE GENOMIC DNA]</scope>
    <source>
        <strain>CC-503</strain>
    </source>
</reference>
<reference key="3">
    <citation type="journal article" date="2002" name="Plant Cell">
        <title>The Chlamydomonas reinhardtii plastid chromosome: islands of genes in a sea of repeats.</title>
        <authorList>
            <person name="Maul J.E."/>
            <person name="Lilly J.W."/>
            <person name="Cui L."/>
            <person name="dePamphilis C.W."/>
            <person name="Miller W."/>
            <person name="Harris E.H."/>
            <person name="Stern D.B."/>
        </authorList>
    </citation>
    <scope>IDENTIFICATION</scope>
    <scope>COMPLETE PLASTID GENOME</scope>
</reference>
<reference key="4">
    <citation type="journal article" date="1987" name="FEBS Lett.">
        <title>A new mutation in the gene coding for the herbicide-binding protein in Chlamydomonas.</title>
        <authorList>
            <person name="Johanningmeier U."/>
            <person name="Bodner U."/>
            <person name="Wildner G.F."/>
        </authorList>
    </citation>
    <scope>HERBICIDE RESISTANCE</scope>
    <scope>MUTAGENESIS OF ALA-251</scope>
</reference>
<reference key="5">
    <citation type="journal article" date="1989" name="Plant Cell">
        <title>Molecular and biophysical analysis of herbicide-resistant mutants of Chlamydomonas reinhardtii: structure-function relationship of the photosystem II D1 polypeptide.</title>
        <authorList>
            <person name="Erickson J.M."/>
            <person name="Pfister K."/>
            <person name="Rahire M."/>
            <person name="Togasaki R.K."/>
            <person name="Mets L."/>
            <person name="Rochaix J.-D."/>
        </authorList>
    </citation>
    <scope>HERBICIDE RESISTANCE</scope>
    <scope>MUTAGENESIS OF VAL-219; PHE-255; GLY-256; SER-264 AND LEU-275</scope>
</reference>
<reference key="6">
    <citation type="journal article" date="1990" name="Z. Naturforsch. C">
        <title>Herbicide cross-resistance and mutations of the psbA gene in Chlamydomonas reinhardtii.</title>
        <authorList>
            <person name="Wildner G.F."/>
            <person name="Heisterkamp U."/>
            <person name="Trebst A."/>
        </authorList>
    </citation>
    <scope>MUTAGENESIS FOR HERBICIDE RESISTANCE</scope>
</reference>
<reference key="7">
    <citation type="journal article" date="1991" name="Plant Cell">
        <title>Site-specific mutagenesis of the D1 subunit of photosystem II in wild-type Chlamydomonas.</title>
        <authorList>
            <person name="Przibilla E."/>
            <person name="Heiss S."/>
            <person name="Johanningmeier U."/>
            <person name="Trebst A."/>
        </authorList>
    </citation>
    <scope>HERBICIDE RESISTANCE</scope>
    <scope>MUTAGENESIS OF 259-ILE--ASN-266 AND 264-SER--ASN-266</scope>
    <source>
        <strain>11/32 b</strain>
    </source>
</reference>
<protein>
    <recommendedName>
        <fullName evidence="1">Photosystem II protein D1</fullName>
        <shortName evidence="1">PSII D1 protein</shortName>
        <ecNumber evidence="1">1.10.3.9</ecNumber>
    </recommendedName>
    <alternativeName>
        <fullName evidence="5">32 kDa thylakoid membrane protein</fullName>
    </alternativeName>
    <alternativeName>
        <fullName evidence="1">Photosystem II Q(B) protein</fullName>
    </alternativeName>
</protein>
<sequence>MTAILERRENSSLWARFCEWITSTENRLYIGWFGVIMIPCLLTATSVFIIAFIAAPPVDIDGIREPVSGSLLYGNNIITGAVIPTSNAIGLHFYPIWEAASLDEWLYNGGPYQLIVCHFLLGVYCYMGREWELSFRLGMRPWIAVAYSAPVAAASAVFLVYPIGQGSFSDGMPLGISGTFNFMIVFQAEHNILMHPFHMLGVAGVFGGSLFSAMHGSLVTSSLIRETTENESANEGYRFGQEEETYNIVAAHGYFGRLIFQYASFNNSRSLHFFLAAWPVIGIWFTALGLSTMAFNLNGFNFNQSVVDSQGRVLNTWADIINRANLGMEVMHERNAHNFPLDLASTNSSSNN</sequence>
<feature type="initiator methionine" description="Removed" evidence="1">
    <location>
        <position position="1"/>
    </location>
</feature>
<feature type="chain" id="PRO_0000090432" description="Photosystem II protein D1" evidence="1">
    <location>
        <begin position="2"/>
        <end position="344"/>
    </location>
</feature>
<feature type="propeptide" id="PRO_0000316443" evidence="1">
    <location>
        <begin position="345"/>
        <end position="352"/>
    </location>
</feature>
<feature type="transmembrane region" description="Helical" evidence="1">
    <location>
        <begin position="29"/>
        <end position="46"/>
    </location>
</feature>
<feature type="transmembrane region" description="Helical" evidence="1">
    <location>
        <begin position="118"/>
        <end position="133"/>
    </location>
</feature>
<feature type="transmembrane region" description="Helical" evidence="1">
    <location>
        <begin position="142"/>
        <end position="156"/>
    </location>
</feature>
<feature type="transmembrane region" description="Helical" evidence="1">
    <location>
        <begin position="197"/>
        <end position="218"/>
    </location>
</feature>
<feature type="transmembrane region" description="Helical" evidence="1">
    <location>
        <begin position="274"/>
        <end position="288"/>
    </location>
</feature>
<feature type="binding site" description="axial binding residue" evidence="1">
    <location>
        <position position="118"/>
    </location>
    <ligand>
        <name>chlorophyll a</name>
        <dbReference type="ChEBI" id="CHEBI:58416"/>
        <label>ChlzD1</label>
    </ligand>
    <ligandPart>
        <name>Mg</name>
        <dbReference type="ChEBI" id="CHEBI:25107"/>
    </ligandPart>
</feature>
<feature type="binding site" evidence="1">
    <location>
        <position position="126"/>
    </location>
    <ligand>
        <name>pheophytin a</name>
        <dbReference type="ChEBI" id="CHEBI:136840"/>
        <label>D1</label>
    </ligand>
</feature>
<feature type="binding site" evidence="1">
    <location>
        <position position="170"/>
    </location>
    <ligand>
        <name>[CaMn4O5] cluster</name>
        <dbReference type="ChEBI" id="CHEBI:189552"/>
    </ligand>
</feature>
<feature type="binding site" evidence="1">
    <location>
        <position position="189"/>
    </location>
    <ligand>
        <name>[CaMn4O5] cluster</name>
        <dbReference type="ChEBI" id="CHEBI:189552"/>
    </ligand>
</feature>
<feature type="binding site" description="axial binding residue" evidence="1">
    <location>
        <position position="198"/>
    </location>
    <ligand>
        <name>chlorophyll a</name>
        <dbReference type="ChEBI" id="CHEBI:58416"/>
        <label>PD1</label>
    </ligand>
    <ligandPart>
        <name>Mg</name>
        <dbReference type="ChEBI" id="CHEBI:25107"/>
    </ligandPart>
</feature>
<feature type="binding site" evidence="1">
    <location>
        <position position="215"/>
    </location>
    <ligand>
        <name>a quinone</name>
        <dbReference type="ChEBI" id="CHEBI:132124"/>
        <label>B</label>
    </ligand>
</feature>
<feature type="binding site" evidence="1">
    <location>
        <position position="215"/>
    </location>
    <ligand>
        <name>Fe cation</name>
        <dbReference type="ChEBI" id="CHEBI:24875"/>
        <note>ligand shared with heterodimeric partner</note>
    </ligand>
</feature>
<feature type="binding site" evidence="1">
    <location>
        <begin position="264"/>
        <end position="265"/>
    </location>
    <ligand>
        <name>a quinone</name>
        <dbReference type="ChEBI" id="CHEBI:132124"/>
        <label>B</label>
    </ligand>
</feature>
<feature type="binding site" evidence="1">
    <location>
        <position position="272"/>
    </location>
    <ligand>
        <name>Fe cation</name>
        <dbReference type="ChEBI" id="CHEBI:24875"/>
        <note>ligand shared with heterodimeric partner</note>
    </ligand>
</feature>
<feature type="binding site" evidence="1">
    <location>
        <position position="332"/>
    </location>
    <ligand>
        <name>[CaMn4O5] cluster</name>
        <dbReference type="ChEBI" id="CHEBI:189552"/>
    </ligand>
</feature>
<feature type="binding site" evidence="1">
    <location>
        <position position="333"/>
    </location>
    <ligand>
        <name>[CaMn4O5] cluster</name>
        <dbReference type="ChEBI" id="CHEBI:189552"/>
    </ligand>
</feature>
<feature type="binding site" evidence="1">
    <location>
        <position position="342"/>
    </location>
    <ligand>
        <name>[CaMn4O5] cluster</name>
        <dbReference type="ChEBI" id="CHEBI:189552"/>
    </ligand>
</feature>
<feature type="binding site" evidence="1">
    <location>
        <position position="344"/>
    </location>
    <ligand>
        <name>[CaMn4O5] cluster</name>
        <dbReference type="ChEBI" id="CHEBI:189552"/>
    </ligand>
</feature>
<feature type="site" description="Tyrosine radical intermediate" evidence="1">
    <location>
        <position position="161"/>
    </location>
</feature>
<feature type="site" description="Stabilizes free radical intermediate" evidence="1">
    <location>
        <position position="190"/>
    </location>
</feature>
<feature type="site" description="Cleavage; by CTPA" evidence="1">
    <location>
        <begin position="344"/>
        <end position="345"/>
    </location>
</feature>
<feature type="modified residue" description="N-acetylthreonine" evidence="1">
    <location>
        <position position="2"/>
    </location>
</feature>
<feature type="modified residue" description="Phosphothreonine" evidence="1">
    <location>
        <position position="2"/>
    </location>
</feature>
<feature type="mutagenesis site" description="Herbicide resistance." evidence="3">
    <original>V</original>
    <variation>I</variation>
    <location>
        <position position="219"/>
    </location>
</feature>
<feature type="mutagenesis site" description="Herbicide resistance." evidence="4">
    <original>A</original>
    <variation>V</variation>
    <location>
        <position position="251"/>
    </location>
</feature>
<feature type="mutagenesis site" description="Herbicide resistance." evidence="3">
    <original>F</original>
    <variation>Y</variation>
    <location>
        <position position="255"/>
    </location>
</feature>
<feature type="mutagenesis site" description="Herbicide resistance." evidence="3">
    <original>G</original>
    <variation>D</variation>
    <location>
        <position position="256"/>
    </location>
</feature>
<feature type="mutagenesis site" description="Herbicide resistance." evidence="2">
    <original>IFQYASFN</original>
    <variation>SFQYAAFT</variation>
    <location>
        <begin position="259"/>
        <end position="266"/>
    </location>
</feature>
<feature type="mutagenesis site" description="Herbicide resistance." evidence="2">
    <original>SFN</original>
    <variation>AFT</variation>
    <location>
        <begin position="264"/>
        <end position="266"/>
    </location>
</feature>
<feature type="mutagenesis site" description="Herbicide resistance." evidence="3">
    <original>S</original>
    <variation>A</variation>
    <location>
        <position position="264"/>
    </location>
</feature>
<feature type="mutagenesis site" description="Herbicide resistance.">
    <original>N</original>
    <variation>T</variation>
    <location>
        <position position="266"/>
    </location>
</feature>
<feature type="mutagenesis site" description="Herbicide resistance." evidence="3">
    <original>L</original>
    <variation>F</variation>
    <location>
        <position position="275"/>
    </location>
</feature>
<feature type="mutagenesis site" description="Herbicide resistance.">
    <original>L</original>
    <variation>P</variation>
    <location>
        <position position="275"/>
    </location>
</feature>
<feature type="helix" evidence="7">
    <location>
        <begin position="13"/>
        <end position="22"/>
    </location>
</feature>
<feature type="strand" evidence="7">
    <location>
        <begin position="26"/>
        <end position="28"/>
    </location>
</feature>
<feature type="helix" evidence="7">
    <location>
        <begin position="31"/>
        <end position="54"/>
    </location>
</feature>
<feature type="strand" evidence="7">
    <location>
        <begin position="60"/>
        <end position="64"/>
    </location>
</feature>
<feature type="turn" evidence="7">
    <location>
        <begin position="72"/>
        <end position="74"/>
    </location>
</feature>
<feature type="turn" evidence="7">
    <location>
        <begin position="77"/>
        <end position="79"/>
    </location>
</feature>
<feature type="turn" evidence="7">
    <location>
        <begin position="87"/>
        <end position="91"/>
    </location>
</feature>
<feature type="helix" evidence="7">
    <location>
        <begin position="96"/>
        <end position="98"/>
    </location>
</feature>
<feature type="strand" evidence="7">
    <location>
        <begin position="99"/>
        <end position="101"/>
    </location>
</feature>
<feature type="helix" evidence="7">
    <location>
        <begin position="102"/>
        <end position="108"/>
    </location>
</feature>
<feature type="helix" evidence="7">
    <location>
        <begin position="110"/>
        <end position="136"/>
    </location>
</feature>
<feature type="helix" evidence="7">
    <location>
        <begin position="143"/>
        <end position="165"/>
    </location>
</feature>
<feature type="helix" evidence="7">
    <location>
        <begin position="168"/>
        <end position="170"/>
    </location>
</feature>
<feature type="helix" evidence="7">
    <location>
        <begin position="176"/>
        <end position="190"/>
    </location>
</feature>
<feature type="helix" evidence="7">
    <location>
        <begin position="192"/>
        <end position="194"/>
    </location>
</feature>
<feature type="helix" evidence="7">
    <location>
        <begin position="196"/>
        <end position="222"/>
    </location>
</feature>
<feature type="helix" evidence="6">
    <location>
        <begin position="233"/>
        <end position="236"/>
    </location>
</feature>
<feature type="turn" evidence="7">
    <location>
        <begin position="247"/>
        <end position="250"/>
    </location>
</feature>
<feature type="helix" evidence="7">
    <location>
        <begin position="251"/>
        <end position="258"/>
    </location>
</feature>
<feature type="helix" evidence="7">
    <location>
        <begin position="268"/>
        <end position="294"/>
    </location>
</feature>
<feature type="helix" evidence="7">
    <location>
        <begin position="309"/>
        <end position="311"/>
    </location>
</feature>
<feature type="helix" evidence="7">
    <location>
        <begin position="317"/>
        <end position="332"/>
    </location>
</feature>
<feature type="strand" evidence="6">
    <location>
        <begin position="338"/>
        <end position="340"/>
    </location>
</feature>
<comment type="function">
    <text>This is one of the two reaction center proteins of photosystem II.</text>
</comment>
<comment type="function">
    <text evidence="1">Photosystem II (PSII) is a light-driven water:plastoquinone oxidoreductase that uses light energy to abstract electrons from H(2)O, generating O(2) and a proton gradient subsequently used for ATP formation. It consists of a core antenna complex that captures photons, and an electron transfer chain that converts photonic excitation into a charge separation. The D1/D2 (PsbA/PsbD) reaction center heterodimer binds P680, the primary electron donor of PSII as well as several subsequent electron acceptors.</text>
</comment>
<comment type="catalytic activity">
    <reaction evidence="1">
        <text>2 a plastoquinone + 4 hnu + 2 H2O = 2 a plastoquinol + O2</text>
        <dbReference type="Rhea" id="RHEA:36359"/>
        <dbReference type="Rhea" id="RHEA-COMP:9561"/>
        <dbReference type="Rhea" id="RHEA-COMP:9562"/>
        <dbReference type="ChEBI" id="CHEBI:15377"/>
        <dbReference type="ChEBI" id="CHEBI:15379"/>
        <dbReference type="ChEBI" id="CHEBI:17757"/>
        <dbReference type="ChEBI" id="CHEBI:30212"/>
        <dbReference type="ChEBI" id="CHEBI:62192"/>
        <dbReference type="EC" id="1.10.3.9"/>
    </reaction>
</comment>
<comment type="cofactor">
    <text evidence="1">The D1/D2 heterodimer binds P680, chlorophylls that are the primary electron donor of PSII, and subsequent electron acceptors. It shares a non-heme iron and each subunit binds pheophytin, quinone, additional chlorophylls, carotenoids and lipids. D1 provides most of the ligands for the Mn4-Ca-O5 cluster of the oxygen-evolving complex (OEC). There is also a Cl(-1) ion associated with D1 and D2, which is required for oxygen evolution. The PSII complex binds additional chlorophylls, carotenoids and specific lipids.</text>
</comment>
<comment type="subunit">
    <text evidence="1">PSII is composed of 1 copy each of membrane proteins PsbA, PsbB, PsbC, PsbD, PsbE, PsbF, PsbH, PsbI, PsbJ, PsbK, PsbL, PsbM, PsbT, PsbX, PsbY, PsbZ, Psb30/Ycf12, at least 3 peripheral proteins of the oxygen-evolving complex and a large number of cofactors. It forms dimeric complexes.</text>
</comment>
<comment type="subcellular location">
    <subcellularLocation>
        <location evidence="1">Plastid</location>
        <location evidence="1">Chloroplast thylakoid membrane</location>
        <topology evidence="1">Multi-pass membrane protein</topology>
    </subcellularLocation>
</comment>
<comment type="PTM">
    <text evidence="1">Tyr-161 forms a radical intermediate that is referred to as redox-active TyrZ, YZ or Y-Z.</text>
</comment>
<comment type="PTM">
    <text evidence="1">C-terminally processed by CTPA; processing is essential to allow assembly of the oxygen-evolving complex and thus photosynthetic growth.</text>
</comment>
<comment type="miscellaneous">
    <text evidence="1">2 of the reaction center chlorophylls (ChlD1 and ChlD2) are entirely coordinated by water.</text>
</comment>
<comment type="miscellaneous">
    <text evidence="1 2 3 4">Herbicides such as atrazine, BNT, diuron or ioxynil bind in the Q(B) binding site and block subsequent electron transfer.</text>
</comment>
<comment type="similarity">
    <text evidence="1">Belongs to the reaction center PufL/M/PsbA/D family.</text>
</comment>
<dbReference type="EC" id="1.10.3.9" evidence="1"/>
<dbReference type="EMBL" id="X01424">
    <property type="protein sequence ID" value="CAA25670.1"/>
    <property type="molecule type" value="Genomic_DNA"/>
</dbReference>
<dbReference type="EMBL" id="X02347">
    <property type="protein sequence ID" value="CAA25670.1"/>
    <property type="status" value="JOINED"/>
    <property type="molecule type" value="Genomic_DNA"/>
</dbReference>
<dbReference type="EMBL" id="X02348">
    <property type="protein sequence ID" value="CAA25670.1"/>
    <property type="status" value="JOINED"/>
    <property type="molecule type" value="Genomic_DNA"/>
</dbReference>
<dbReference type="EMBL" id="X02349">
    <property type="protein sequence ID" value="CAA25670.1"/>
    <property type="status" value="JOINED"/>
    <property type="molecule type" value="Genomic_DNA"/>
</dbReference>
<dbReference type="EMBL" id="X02350">
    <property type="protein sequence ID" value="CAA25670.1"/>
    <property type="status" value="JOINED"/>
    <property type="molecule type" value="Genomic_DNA"/>
</dbReference>
<dbReference type="EMBL" id="FJ423446">
    <property type="protein sequence ID" value="ACJ50111.1"/>
    <property type="molecule type" value="Genomic_DNA"/>
</dbReference>
<dbReference type="EMBL" id="FJ423446">
    <property type="protein sequence ID" value="ACJ50144.1"/>
    <property type="molecule type" value="Genomic_DNA"/>
</dbReference>
<dbReference type="EMBL" id="BK000554">
    <property type="protein sequence ID" value="DAA00922.1"/>
    <property type="molecule type" value="Genomic_DNA"/>
</dbReference>
<dbReference type="EMBL" id="BK000554">
    <property type="protein sequence ID" value="DAA00957.1"/>
    <property type="molecule type" value="Genomic_DNA"/>
</dbReference>
<dbReference type="PIR" id="A22780">
    <property type="entry name" value="A22780"/>
</dbReference>
<dbReference type="RefSeq" id="NP_958377.1">
    <property type="nucleotide sequence ID" value="NC_005353.1"/>
</dbReference>
<dbReference type="RefSeq" id="NP_958413.1">
    <property type="nucleotide sequence ID" value="NC_005353.1"/>
</dbReference>
<dbReference type="PDB" id="6KAC">
    <property type="method" value="EM"/>
    <property type="resolution" value="2.70 A"/>
    <property type="chains" value="A/a=1-352"/>
</dbReference>
<dbReference type="PDB" id="6KAD">
    <property type="method" value="EM"/>
    <property type="resolution" value="3.40 A"/>
    <property type="chains" value="A/a=1-352"/>
</dbReference>
<dbReference type="PDB" id="6KAF">
    <property type="method" value="EM"/>
    <property type="resolution" value="3.73 A"/>
    <property type="chains" value="A/a=1-352"/>
</dbReference>
<dbReference type="PDB" id="8KDE">
    <property type="method" value="EM"/>
    <property type="resolution" value="2.60 A"/>
    <property type="chains" value="A=1-352"/>
</dbReference>
<dbReference type="PDB" id="8R2I">
    <property type="method" value="EM"/>
    <property type="resolution" value="2.90 A"/>
    <property type="chains" value="A=11-337"/>
</dbReference>
<dbReference type="PDB" id="8ZEE">
    <property type="method" value="EM"/>
    <property type="resolution" value="2.90 A"/>
    <property type="chains" value="A=10-338"/>
</dbReference>
<dbReference type="PDBsum" id="6KAC"/>
<dbReference type="PDBsum" id="6KAD"/>
<dbReference type="PDBsum" id="6KAF"/>
<dbReference type="PDBsum" id="8KDE"/>
<dbReference type="PDBsum" id="8R2I"/>
<dbReference type="PDBsum" id="8ZEE"/>
<dbReference type="EMDB" id="EMD-18848"/>
<dbReference type="EMDB" id="EMD-37133"/>
<dbReference type="EMDB" id="EMD-60026"/>
<dbReference type="EMDB" id="EMD-9955"/>
<dbReference type="EMDB" id="EMD-9956"/>
<dbReference type="EMDB" id="EMD-9957"/>
<dbReference type="SMR" id="P07753"/>
<dbReference type="FunCoup" id="P07753">
    <property type="interactions" value="157"/>
</dbReference>
<dbReference type="STRING" id="3055.P07753"/>
<dbReference type="ChEMBL" id="CHEMBL2268003"/>
<dbReference type="PaxDb" id="3055-DAA00922"/>
<dbReference type="GeneID" id="2716969"/>
<dbReference type="GeneID" id="2716987"/>
<dbReference type="KEGG" id="cre:ChreCp021"/>
<dbReference type="KEGG" id="cre:ChreCp057"/>
<dbReference type="eggNOG" id="ENOG502QR09">
    <property type="taxonomic scope" value="Eukaryota"/>
</dbReference>
<dbReference type="HOGENOM" id="CLU_054206_1_0_1"/>
<dbReference type="InParanoid" id="P07753"/>
<dbReference type="BioCyc" id="CHLAMY:CHRECP057-MONOMER"/>
<dbReference type="BioCyc" id="MetaCyc:CHRECP057-MONOMER"/>
<dbReference type="Proteomes" id="UP000006906">
    <property type="component" value="Chloroplast"/>
</dbReference>
<dbReference type="GO" id="GO:0009535">
    <property type="term" value="C:chloroplast thylakoid membrane"/>
    <property type="evidence" value="ECO:0007669"/>
    <property type="project" value="UniProtKB-SubCell"/>
</dbReference>
<dbReference type="GO" id="GO:0009523">
    <property type="term" value="C:photosystem II"/>
    <property type="evidence" value="ECO:0000318"/>
    <property type="project" value="GO_Central"/>
</dbReference>
<dbReference type="GO" id="GO:0016168">
    <property type="term" value="F:chlorophyll binding"/>
    <property type="evidence" value="ECO:0007669"/>
    <property type="project" value="UniProtKB-UniRule"/>
</dbReference>
<dbReference type="GO" id="GO:0045156">
    <property type="term" value="F:electron transporter, transferring electrons within the cyclic electron transport pathway of photosynthesis activity"/>
    <property type="evidence" value="ECO:0007669"/>
    <property type="project" value="InterPro"/>
</dbReference>
<dbReference type="GO" id="GO:0005506">
    <property type="term" value="F:iron ion binding"/>
    <property type="evidence" value="ECO:0007669"/>
    <property type="project" value="UniProtKB-UniRule"/>
</dbReference>
<dbReference type="GO" id="GO:0016682">
    <property type="term" value="F:oxidoreductase activity, acting on diphenols and related substances as donors, oxygen as acceptor"/>
    <property type="evidence" value="ECO:0007669"/>
    <property type="project" value="UniProtKB-UniRule"/>
</dbReference>
<dbReference type="GO" id="GO:0010242">
    <property type="term" value="F:oxygen evolving activity"/>
    <property type="evidence" value="ECO:0007669"/>
    <property type="project" value="UniProtKB-EC"/>
</dbReference>
<dbReference type="GO" id="GO:0009772">
    <property type="term" value="P:photosynthetic electron transport in photosystem II"/>
    <property type="evidence" value="ECO:0007669"/>
    <property type="project" value="InterPro"/>
</dbReference>
<dbReference type="GO" id="GO:0009635">
    <property type="term" value="P:response to herbicide"/>
    <property type="evidence" value="ECO:0007669"/>
    <property type="project" value="UniProtKB-KW"/>
</dbReference>
<dbReference type="CDD" id="cd09289">
    <property type="entry name" value="Photosystem-II_D1"/>
    <property type="match status" value="1"/>
</dbReference>
<dbReference type="FunFam" id="1.20.85.10:FF:000002">
    <property type="entry name" value="Photosystem II protein D1"/>
    <property type="match status" value="1"/>
</dbReference>
<dbReference type="Gene3D" id="1.20.85.10">
    <property type="entry name" value="Photosystem II protein D1-like"/>
    <property type="match status" value="1"/>
</dbReference>
<dbReference type="HAMAP" id="MF_01379">
    <property type="entry name" value="PSII_PsbA_D1"/>
    <property type="match status" value="1"/>
</dbReference>
<dbReference type="InterPro" id="IPR055266">
    <property type="entry name" value="D1/D2"/>
</dbReference>
<dbReference type="InterPro" id="IPR036854">
    <property type="entry name" value="Photo_II_D1/D2_sf"/>
</dbReference>
<dbReference type="InterPro" id="IPR000484">
    <property type="entry name" value="Photo_RC_L/M"/>
</dbReference>
<dbReference type="InterPro" id="IPR055265">
    <property type="entry name" value="Photo_RC_L/M_CS"/>
</dbReference>
<dbReference type="InterPro" id="IPR005867">
    <property type="entry name" value="PSII_D1"/>
</dbReference>
<dbReference type="NCBIfam" id="TIGR01151">
    <property type="entry name" value="psbA"/>
    <property type="match status" value="1"/>
</dbReference>
<dbReference type="PANTHER" id="PTHR33149:SF12">
    <property type="entry name" value="PHOTOSYSTEM II D2 PROTEIN"/>
    <property type="match status" value="1"/>
</dbReference>
<dbReference type="PANTHER" id="PTHR33149">
    <property type="entry name" value="PHOTOSYSTEM II PROTEIN D1"/>
    <property type="match status" value="1"/>
</dbReference>
<dbReference type="Pfam" id="PF00124">
    <property type="entry name" value="Photo_RC"/>
    <property type="match status" value="1"/>
</dbReference>
<dbReference type="PRINTS" id="PR00256">
    <property type="entry name" value="REACTNCENTRE"/>
</dbReference>
<dbReference type="SUPFAM" id="SSF81483">
    <property type="entry name" value="Bacterial photosystem II reaction centre, L and M subunits"/>
    <property type="match status" value="1"/>
</dbReference>
<dbReference type="PROSITE" id="PS00244">
    <property type="entry name" value="REACTION_CENTER"/>
    <property type="match status" value="1"/>
</dbReference>
<name>PSBA_CHLRE</name>
<keyword id="KW-0002">3D-structure</keyword>
<keyword id="KW-0007">Acetylation</keyword>
<keyword id="KW-0106">Calcium</keyword>
<keyword id="KW-0148">Chlorophyll</keyword>
<keyword id="KW-0150">Chloroplast</keyword>
<keyword id="KW-0157">Chromophore</keyword>
<keyword id="KW-0249">Electron transport</keyword>
<keyword id="KW-0359">Herbicide resistance</keyword>
<keyword id="KW-0408">Iron</keyword>
<keyword id="KW-0460">Magnesium</keyword>
<keyword id="KW-0464">Manganese</keyword>
<keyword id="KW-0472">Membrane</keyword>
<keyword id="KW-0479">Metal-binding</keyword>
<keyword id="KW-0560">Oxidoreductase</keyword>
<keyword id="KW-0597">Phosphoprotein</keyword>
<keyword id="KW-0602">Photosynthesis</keyword>
<keyword id="KW-0604">Photosystem II</keyword>
<keyword id="KW-0934">Plastid</keyword>
<keyword id="KW-1185">Reference proteome</keyword>
<keyword id="KW-0793">Thylakoid</keyword>
<keyword id="KW-0812">Transmembrane</keyword>
<keyword id="KW-1133">Transmembrane helix</keyword>
<keyword id="KW-0813">Transport</keyword>
<accession>P07753</accession>
<accession>B7U1G3</accession>
<evidence type="ECO:0000255" key="1">
    <source>
        <dbReference type="HAMAP-Rule" id="MF_01379"/>
    </source>
</evidence>
<evidence type="ECO:0000269" key="2">
    <source>
    </source>
</evidence>
<evidence type="ECO:0000269" key="3">
    <source>
    </source>
</evidence>
<evidence type="ECO:0000269" key="4">
    <source ref="4"/>
</evidence>
<evidence type="ECO:0000303" key="5">
    <source>
    </source>
</evidence>
<evidence type="ECO:0007829" key="6">
    <source>
        <dbReference type="PDB" id="6KAC"/>
    </source>
</evidence>
<evidence type="ECO:0007829" key="7">
    <source>
        <dbReference type="PDB" id="8KDE"/>
    </source>
</evidence>
<organism>
    <name type="scientific">Chlamydomonas reinhardtii</name>
    <name type="common">Chlamydomonas smithii</name>
    <dbReference type="NCBI Taxonomy" id="3055"/>
    <lineage>
        <taxon>Eukaryota</taxon>
        <taxon>Viridiplantae</taxon>
        <taxon>Chlorophyta</taxon>
        <taxon>core chlorophytes</taxon>
        <taxon>Chlorophyceae</taxon>
        <taxon>CS clade</taxon>
        <taxon>Chlamydomonadales</taxon>
        <taxon>Chlamydomonadaceae</taxon>
        <taxon>Chlamydomonas</taxon>
    </lineage>
</organism>
<geneLocation type="chloroplast"/>